<evidence type="ECO:0000255" key="1">
    <source>
        <dbReference type="PROSITE-ProRule" id="PRU00303"/>
    </source>
</evidence>
<evidence type="ECO:0000256" key="2">
    <source>
        <dbReference type="SAM" id="MobiDB-lite"/>
    </source>
</evidence>
<evidence type="ECO:0000305" key="3"/>
<accession>A1ITU2</accession>
<feature type="signal peptide" evidence="1">
    <location>
        <begin position="1"/>
        <end position="14"/>
    </location>
</feature>
<feature type="chain" id="PRO_0000344486" description="Adhesin MafA 2">
    <location>
        <begin position="15"/>
        <end position="313"/>
    </location>
</feature>
<feature type="region of interest" description="Disordered" evidence="2">
    <location>
        <begin position="282"/>
        <end position="313"/>
    </location>
</feature>
<feature type="compositionally biased region" description="Polar residues" evidence="2">
    <location>
        <begin position="282"/>
        <end position="297"/>
    </location>
</feature>
<feature type="lipid moiety-binding region" description="N-palmitoyl cysteine" evidence="1">
    <location>
        <position position="15"/>
    </location>
</feature>
<feature type="lipid moiety-binding region" description="S-diacylglycerol cysteine" evidence="1">
    <location>
        <position position="15"/>
    </location>
</feature>
<name>MAFA2_NEIMA</name>
<organism>
    <name type="scientific">Neisseria meningitidis serogroup A / serotype 4A (strain DSM 15465 / Z2491)</name>
    <dbReference type="NCBI Taxonomy" id="122587"/>
    <lineage>
        <taxon>Bacteria</taxon>
        <taxon>Pseudomonadati</taxon>
        <taxon>Pseudomonadota</taxon>
        <taxon>Betaproteobacteria</taxon>
        <taxon>Neisseriales</taxon>
        <taxon>Neisseriaceae</taxon>
        <taxon>Neisseria</taxon>
    </lineage>
</organism>
<reference key="1">
    <citation type="journal article" date="2000" name="Nature">
        <title>Complete DNA sequence of a serogroup A strain of Neisseria meningitidis Z2491.</title>
        <authorList>
            <person name="Parkhill J."/>
            <person name="Achtman M."/>
            <person name="James K.D."/>
            <person name="Bentley S.D."/>
            <person name="Churcher C.M."/>
            <person name="Klee S.R."/>
            <person name="Morelli G."/>
            <person name="Basham D."/>
            <person name="Brown D."/>
            <person name="Chillingworth T."/>
            <person name="Davies R.M."/>
            <person name="Davis P."/>
            <person name="Devlin K."/>
            <person name="Feltwell T."/>
            <person name="Hamlin N."/>
            <person name="Holroyd S."/>
            <person name="Jagels K."/>
            <person name="Leather S."/>
            <person name="Moule S."/>
            <person name="Mungall K.L."/>
            <person name="Quail M.A."/>
            <person name="Rajandream M.A."/>
            <person name="Rutherford K.M."/>
            <person name="Simmonds M."/>
            <person name="Skelton J."/>
            <person name="Whitehead S."/>
            <person name="Spratt B.G."/>
            <person name="Barrell B.G."/>
        </authorList>
    </citation>
    <scope>NUCLEOTIDE SEQUENCE [LARGE SCALE GENOMIC DNA]</scope>
    <source>
        <strain>DSM 15465 / Z2491</strain>
    </source>
</reference>
<proteinExistence type="inferred from homology"/>
<comment type="subcellular location">
    <subcellularLocation>
        <location evidence="3">Cell outer membrane</location>
        <topology evidence="1">Lipid-anchor</topology>
    </subcellularLocation>
</comment>
<comment type="similarity">
    <text evidence="3">Belongs to the MafA family.</text>
</comment>
<dbReference type="EMBL" id="AL157959">
    <property type="protein sequence ID" value="CAM09211.1"/>
    <property type="molecule type" value="Genomic_DNA"/>
</dbReference>
<dbReference type="PIR" id="G81782">
    <property type="entry name" value="G81782"/>
</dbReference>
<dbReference type="EnsemblBacteria" id="CAM09211">
    <property type="protein sequence ID" value="CAM09211"/>
    <property type="gene ID" value="NMA2112"/>
</dbReference>
<dbReference type="KEGG" id="nma:NMA2112"/>
<dbReference type="HOGENOM" id="CLU_985210_0_0_4"/>
<dbReference type="Proteomes" id="UP000000626">
    <property type="component" value="Chromosome"/>
</dbReference>
<dbReference type="GO" id="GO:0009279">
    <property type="term" value="C:cell outer membrane"/>
    <property type="evidence" value="ECO:0007669"/>
    <property type="project" value="UniProtKB-SubCell"/>
</dbReference>
<dbReference type="GO" id="GO:0007155">
    <property type="term" value="P:cell adhesion"/>
    <property type="evidence" value="ECO:0007669"/>
    <property type="project" value="UniProtKB-KW"/>
</dbReference>
<dbReference type="PROSITE" id="PS51257">
    <property type="entry name" value="PROKAR_LIPOPROTEIN"/>
    <property type="match status" value="1"/>
</dbReference>
<keyword id="KW-0130">Cell adhesion</keyword>
<keyword id="KW-0998">Cell outer membrane</keyword>
<keyword id="KW-0449">Lipoprotein</keyword>
<keyword id="KW-0472">Membrane</keyword>
<keyword id="KW-0564">Palmitate</keyword>
<keyword id="KW-0732">Signal</keyword>
<keyword id="KW-0843">Virulence</keyword>
<sequence>MKTLLLLIPLVLTACGTLTGIPAHGGGKRFAVEQELVAASSRAAVKEMDLSALKGRKAALYVSVMGDQGSGNISGGRYSIDALIRGGYHNNPESATQYSYPAYDTTATTKSDALSSVTTSTSLLNAPAAALTKNSGRKGERSAGLSVNGTGDYRNETLLANPRDVSFLTNLIQTVFYLRGIEVVPPEYADTDVFVTVDVFGTVRSRTELHLYNAETLKAQTKLEYFAVDRDSRKLLIAPKTAAYESQYQEQYALWMGPYSVGKTVKASDRLMVDFSDITPYGDTTAQNRPDFKQNNGKKPDVGNEVIRRRKGG</sequence>
<gene>
    <name type="primary">mafA2</name>
    <name type="ordered locus">NMA2112</name>
</gene>
<protein>
    <recommendedName>
        <fullName>Adhesin MafA 2</fullName>
    </recommendedName>
</protein>